<protein>
    <recommendedName>
        <fullName evidence="1">Shikimate kinase</fullName>
        <shortName evidence="1">SK</shortName>
        <ecNumber evidence="1">2.7.1.71</ecNumber>
    </recommendedName>
</protein>
<sequence length="165" mass="19131">MKSIYITGYMGAGKTTIGKALSKELHMDVVDTDQKIEEKQGKVIRDIFAEEGEMAFREYESEMLCSLPVDNVIITTGGGIVEREENRKWMKENGTVVYLYCDPHVIAERLREDTTRPLFQKKDIDAFVTKFESRRAYYEEAHIHIDTTNKSVKQIMNELKEKINE</sequence>
<keyword id="KW-0028">Amino-acid biosynthesis</keyword>
<keyword id="KW-0057">Aromatic amino acid biosynthesis</keyword>
<keyword id="KW-0067">ATP-binding</keyword>
<keyword id="KW-0963">Cytoplasm</keyword>
<keyword id="KW-0418">Kinase</keyword>
<keyword id="KW-0460">Magnesium</keyword>
<keyword id="KW-0479">Metal-binding</keyword>
<keyword id="KW-0547">Nucleotide-binding</keyword>
<keyword id="KW-0808">Transferase</keyword>
<evidence type="ECO:0000255" key="1">
    <source>
        <dbReference type="HAMAP-Rule" id="MF_00109"/>
    </source>
</evidence>
<dbReference type="EC" id="2.7.1.71" evidence="1"/>
<dbReference type="EMBL" id="CP001215">
    <property type="protein sequence ID" value="ACP17495.1"/>
    <property type="molecule type" value="Genomic_DNA"/>
</dbReference>
<dbReference type="RefSeq" id="WP_000836640.1">
    <property type="nucleotide sequence ID" value="NC_012581.1"/>
</dbReference>
<dbReference type="SMR" id="C3LKR2"/>
<dbReference type="GeneID" id="45024114"/>
<dbReference type="KEGG" id="bah:BAMEG_4492"/>
<dbReference type="HOGENOM" id="CLU_057607_4_3_9"/>
<dbReference type="UniPathway" id="UPA00053">
    <property type="reaction ID" value="UER00088"/>
</dbReference>
<dbReference type="GO" id="GO:0005829">
    <property type="term" value="C:cytosol"/>
    <property type="evidence" value="ECO:0007669"/>
    <property type="project" value="TreeGrafter"/>
</dbReference>
<dbReference type="GO" id="GO:0005524">
    <property type="term" value="F:ATP binding"/>
    <property type="evidence" value="ECO:0007669"/>
    <property type="project" value="UniProtKB-UniRule"/>
</dbReference>
<dbReference type="GO" id="GO:0000287">
    <property type="term" value="F:magnesium ion binding"/>
    <property type="evidence" value="ECO:0007669"/>
    <property type="project" value="UniProtKB-UniRule"/>
</dbReference>
<dbReference type="GO" id="GO:0004765">
    <property type="term" value="F:shikimate kinase activity"/>
    <property type="evidence" value="ECO:0007669"/>
    <property type="project" value="UniProtKB-UniRule"/>
</dbReference>
<dbReference type="GO" id="GO:0008652">
    <property type="term" value="P:amino acid biosynthetic process"/>
    <property type="evidence" value="ECO:0007669"/>
    <property type="project" value="UniProtKB-KW"/>
</dbReference>
<dbReference type="GO" id="GO:0009073">
    <property type="term" value="P:aromatic amino acid family biosynthetic process"/>
    <property type="evidence" value="ECO:0007669"/>
    <property type="project" value="UniProtKB-KW"/>
</dbReference>
<dbReference type="GO" id="GO:0009423">
    <property type="term" value="P:chorismate biosynthetic process"/>
    <property type="evidence" value="ECO:0007669"/>
    <property type="project" value="UniProtKB-UniRule"/>
</dbReference>
<dbReference type="CDD" id="cd00464">
    <property type="entry name" value="SK"/>
    <property type="match status" value="1"/>
</dbReference>
<dbReference type="Gene3D" id="3.40.50.300">
    <property type="entry name" value="P-loop containing nucleotide triphosphate hydrolases"/>
    <property type="match status" value="1"/>
</dbReference>
<dbReference type="HAMAP" id="MF_00109">
    <property type="entry name" value="Shikimate_kinase"/>
    <property type="match status" value="1"/>
</dbReference>
<dbReference type="InterPro" id="IPR027417">
    <property type="entry name" value="P-loop_NTPase"/>
</dbReference>
<dbReference type="InterPro" id="IPR031322">
    <property type="entry name" value="Shikimate/glucono_kinase"/>
</dbReference>
<dbReference type="InterPro" id="IPR000623">
    <property type="entry name" value="Shikimate_kinase/TSH1"/>
</dbReference>
<dbReference type="PANTHER" id="PTHR21087">
    <property type="entry name" value="SHIKIMATE KINASE"/>
    <property type="match status" value="1"/>
</dbReference>
<dbReference type="PANTHER" id="PTHR21087:SF16">
    <property type="entry name" value="SHIKIMATE KINASE 1, CHLOROPLASTIC"/>
    <property type="match status" value="1"/>
</dbReference>
<dbReference type="Pfam" id="PF01202">
    <property type="entry name" value="SKI"/>
    <property type="match status" value="1"/>
</dbReference>
<dbReference type="PRINTS" id="PR01100">
    <property type="entry name" value="SHIKIMTKNASE"/>
</dbReference>
<dbReference type="SUPFAM" id="SSF52540">
    <property type="entry name" value="P-loop containing nucleoside triphosphate hydrolases"/>
    <property type="match status" value="1"/>
</dbReference>
<proteinExistence type="inferred from homology"/>
<comment type="function">
    <text evidence="1">Catalyzes the specific phosphorylation of the 3-hydroxyl group of shikimic acid using ATP as a cosubstrate.</text>
</comment>
<comment type="catalytic activity">
    <reaction evidence="1">
        <text>shikimate + ATP = 3-phosphoshikimate + ADP + H(+)</text>
        <dbReference type="Rhea" id="RHEA:13121"/>
        <dbReference type="ChEBI" id="CHEBI:15378"/>
        <dbReference type="ChEBI" id="CHEBI:30616"/>
        <dbReference type="ChEBI" id="CHEBI:36208"/>
        <dbReference type="ChEBI" id="CHEBI:145989"/>
        <dbReference type="ChEBI" id="CHEBI:456216"/>
        <dbReference type="EC" id="2.7.1.71"/>
    </reaction>
</comment>
<comment type="cofactor">
    <cofactor evidence="1">
        <name>Mg(2+)</name>
        <dbReference type="ChEBI" id="CHEBI:18420"/>
    </cofactor>
    <text evidence="1">Binds 1 Mg(2+) ion per subunit.</text>
</comment>
<comment type="pathway">
    <text evidence="1">Metabolic intermediate biosynthesis; chorismate biosynthesis; chorismate from D-erythrose 4-phosphate and phosphoenolpyruvate: step 5/7.</text>
</comment>
<comment type="subunit">
    <text evidence="1">Monomer.</text>
</comment>
<comment type="subcellular location">
    <subcellularLocation>
        <location evidence="1">Cytoplasm</location>
    </subcellularLocation>
</comment>
<comment type="similarity">
    <text evidence="1">Belongs to the shikimate kinase family.</text>
</comment>
<name>AROK_BACAC</name>
<reference key="1">
    <citation type="submission" date="2008-10" db="EMBL/GenBank/DDBJ databases">
        <title>Genome sequence of Bacillus anthracis str. CDC 684.</title>
        <authorList>
            <person name="Dodson R.J."/>
            <person name="Munk A.C."/>
            <person name="Brettin T."/>
            <person name="Bruce D."/>
            <person name="Detter C."/>
            <person name="Tapia R."/>
            <person name="Han C."/>
            <person name="Sutton G."/>
            <person name="Sims D."/>
        </authorList>
    </citation>
    <scope>NUCLEOTIDE SEQUENCE [LARGE SCALE GENOMIC DNA]</scope>
    <source>
        <strain>CDC 684 / NRRL 3495</strain>
    </source>
</reference>
<feature type="chain" id="PRO_1000119044" description="Shikimate kinase">
    <location>
        <begin position="1"/>
        <end position="165"/>
    </location>
</feature>
<feature type="binding site" evidence="1">
    <location>
        <begin position="11"/>
        <end position="16"/>
    </location>
    <ligand>
        <name>ATP</name>
        <dbReference type="ChEBI" id="CHEBI:30616"/>
    </ligand>
</feature>
<feature type="binding site" evidence="1">
    <location>
        <position position="15"/>
    </location>
    <ligand>
        <name>Mg(2+)</name>
        <dbReference type="ChEBI" id="CHEBI:18420"/>
    </ligand>
</feature>
<feature type="binding site" evidence="1">
    <location>
        <position position="33"/>
    </location>
    <ligand>
        <name>substrate</name>
    </ligand>
</feature>
<feature type="binding site" evidence="1">
    <location>
        <position position="57"/>
    </location>
    <ligand>
        <name>substrate</name>
    </ligand>
</feature>
<feature type="binding site" evidence="1">
    <location>
        <position position="78"/>
    </location>
    <ligand>
        <name>substrate</name>
    </ligand>
</feature>
<feature type="binding site" evidence="1">
    <location>
        <position position="116"/>
    </location>
    <ligand>
        <name>ATP</name>
        <dbReference type="ChEBI" id="CHEBI:30616"/>
    </ligand>
</feature>
<feature type="binding site" evidence="1">
    <location>
        <position position="134"/>
    </location>
    <ligand>
        <name>substrate</name>
    </ligand>
</feature>
<organism>
    <name type="scientific">Bacillus anthracis (strain CDC 684 / NRRL 3495)</name>
    <dbReference type="NCBI Taxonomy" id="568206"/>
    <lineage>
        <taxon>Bacteria</taxon>
        <taxon>Bacillati</taxon>
        <taxon>Bacillota</taxon>
        <taxon>Bacilli</taxon>
        <taxon>Bacillales</taxon>
        <taxon>Bacillaceae</taxon>
        <taxon>Bacillus</taxon>
        <taxon>Bacillus cereus group</taxon>
    </lineage>
</organism>
<accession>C3LKR2</accession>
<gene>
    <name evidence="1" type="primary">aroK</name>
    <name type="ordered locus">BAMEG_4492</name>
</gene>